<protein>
    <recommendedName>
        <fullName evidence="1">Small ribosomal subunit protein uS8</fullName>
    </recommendedName>
    <alternativeName>
        <fullName evidence="2">30S ribosomal protein S8</fullName>
    </alternativeName>
</protein>
<sequence>MSMSDPIADFLTRIRNANMAHHDSVEAPASKMKKDIAEILKQEGFIRDVEYVEDNKQGIIRVFLKYGQDGERVISGLKRISKPGLRSYVKADAVPKVLNGLGIAIISTSNGVVTDKVARAKKVGGEVVAYIW</sequence>
<name>RS8_LIMF3</name>
<reference key="1">
    <citation type="journal article" date="2008" name="DNA Res.">
        <title>Comparative genome analysis of Lactobacillus reuteri and Lactobacillus fermentum reveal a genomic island for reuterin and cobalamin production.</title>
        <authorList>
            <person name="Morita H."/>
            <person name="Toh H."/>
            <person name="Fukuda S."/>
            <person name="Horikawa H."/>
            <person name="Oshima K."/>
            <person name="Suzuki T."/>
            <person name="Murakami M."/>
            <person name="Hisamatsu S."/>
            <person name="Kato Y."/>
            <person name="Takizawa T."/>
            <person name="Fukuoka H."/>
            <person name="Yoshimura T."/>
            <person name="Itoh K."/>
            <person name="O'Sullivan D.J."/>
            <person name="McKay L.L."/>
            <person name="Ohno H."/>
            <person name="Kikuchi J."/>
            <person name="Masaoka T."/>
            <person name="Hattori M."/>
        </authorList>
    </citation>
    <scope>NUCLEOTIDE SEQUENCE [LARGE SCALE GENOMIC DNA]</scope>
    <source>
        <strain>NBRC 3956 / LMG 18251</strain>
    </source>
</reference>
<feature type="chain" id="PRO_1000140572" description="Small ribosomal subunit protein uS8">
    <location>
        <begin position="1"/>
        <end position="132"/>
    </location>
</feature>
<evidence type="ECO:0000255" key="1">
    <source>
        <dbReference type="HAMAP-Rule" id="MF_01302"/>
    </source>
</evidence>
<evidence type="ECO:0000305" key="2"/>
<organism>
    <name type="scientific">Limosilactobacillus fermentum (strain NBRC 3956 / LMG 18251)</name>
    <name type="common">Lactobacillus fermentum</name>
    <dbReference type="NCBI Taxonomy" id="334390"/>
    <lineage>
        <taxon>Bacteria</taxon>
        <taxon>Bacillati</taxon>
        <taxon>Bacillota</taxon>
        <taxon>Bacilli</taxon>
        <taxon>Lactobacillales</taxon>
        <taxon>Lactobacillaceae</taxon>
        <taxon>Limosilactobacillus</taxon>
    </lineage>
</organism>
<gene>
    <name evidence="1" type="primary">rpsH</name>
    <name type="ordered locus">LAF_1501</name>
</gene>
<keyword id="KW-1185">Reference proteome</keyword>
<keyword id="KW-0687">Ribonucleoprotein</keyword>
<keyword id="KW-0689">Ribosomal protein</keyword>
<keyword id="KW-0694">RNA-binding</keyword>
<keyword id="KW-0699">rRNA-binding</keyword>
<accession>B2GDV5</accession>
<dbReference type="EMBL" id="AP008937">
    <property type="protein sequence ID" value="BAG27837.1"/>
    <property type="molecule type" value="Genomic_DNA"/>
</dbReference>
<dbReference type="RefSeq" id="WP_004562962.1">
    <property type="nucleotide sequence ID" value="NC_010610.1"/>
</dbReference>
<dbReference type="SMR" id="B2GDV5"/>
<dbReference type="GeneID" id="83716122"/>
<dbReference type="KEGG" id="lfe:LAF_1501"/>
<dbReference type="eggNOG" id="COG0096">
    <property type="taxonomic scope" value="Bacteria"/>
</dbReference>
<dbReference type="HOGENOM" id="CLU_098428_0_2_9"/>
<dbReference type="Proteomes" id="UP000001697">
    <property type="component" value="Chromosome"/>
</dbReference>
<dbReference type="GO" id="GO:1990904">
    <property type="term" value="C:ribonucleoprotein complex"/>
    <property type="evidence" value="ECO:0007669"/>
    <property type="project" value="UniProtKB-KW"/>
</dbReference>
<dbReference type="GO" id="GO:0005840">
    <property type="term" value="C:ribosome"/>
    <property type="evidence" value="ECO:0007669"/>
    <property type="project" value="UniProtKB-KW"/>
</dbReference>
<dbReference type="GO" id="GO:0019843">
    <property type="term" value="F:rRNA binding"/>
    <property type="evidence" value="ECO:0007669"/>
    <property type="project" value="UniProtKB-UniRule"/>
</dbReference>
<dbReference type="GO" id="GO:0003735">
    <property type="term" value="F:structural constituent of ribosome"/>
    <property type="evidence" value="ECO:0007669"/>
    <property type="project" value="InterPro"/>
</dbReference>
<dbReference type="GO" id="GO:0006412">
    <property type="term" value="P:translation"/>
    <property type="evidence" value="ECO:0007669"/>
    <property type="project" value="UniProtKB-UniRule"/>
</dbReference>
<dbReference type="FunFam" id="3.30.1370.30:FF:000002">
    <property type="entry name" value="30S ribosomal protein S8"/>
    <property type="match status" value="1"/>
</dbReference>
<dbReference type="FunFam" id="3.30.1490.10:FF:000001">
    <property type="entry name" value="30S ribosomal protein S8"/>
    <property type="match status" value="1"/>
</dbReference>
<dbReference type="Gene3D" id="3.30.1370.30">
    <property type="match status" value="1"/>
</dbReference>
<dbReference type="Gene3D" id="3.30.1490.10">
    <property type="match status" value="1"/>
</dbReference>
<dbReference type="HAMAP" id="MF_01302_B">
    <property type="entry name" value="Ribosomal_uS8_B"/>
    <property type="match status" value="1"/>
</dbReference>
<dbReference type="InterPro" id="IPR000630">
    <property type="entry name" value="Ribosomal_uS8"/>
</dbReference>
<dbReference type="InterPro" id="IPR047863">
    <property type="entry name" value="Ribosomal_uS8_CS"/>
</dbReference>
<dbReference type="InterPro" id="IPR035987">
    <property type="entry name" value="Ribosomal_uS8_sf"/>
</dbReference>
<dbReference type="NCBIfam" id="NF001109">
    <property type="entry name" value="PRK00136.1"/>
    <property type="match status" value="1"/>
</dbReference>
<dbReference type="PANTHER" id="PTHR11758">
    <property type="entry name" value="40S RIBOSOMAL PROTEIN S15A"/>
    <property type="match status" value="1"/>
</dbReference>
<dbReference type="Pfam" id="PF00410">
    <property type="entry name" value="Ribosomal_S8"/>
    <property type="match status" value="1"/>
</dbReference>
<dbReference type="SUPFAM" id="SSF56047">
    <property type="entry name" value="Ribosomal protein S8"/>
    <property type="match status" value="1"/>
</dbReference>
<dbReference type="PROSITE" id="PS00053">
    <property type="entry name" value="RIBOSOMAL_S8"/>
    <property type="match status" value="1"/>
</dbReference>
<comment type="function">
    <text evidence="1">One of the primary rRNA binding proteins, it binds directly to 16S rRNA central domain where it helps coordinate assembly of the platform of the 30S subunit.</text>
</comment>
<comment type="subunit">
    <text evidence="1">Part of the 30S ribosomal subunit. Contacts proteins S5 and S12.</text>
</comment>
<comment type="similarity">
    <text evidence="1">Belongs to the universal ribosomal protein uS8 family.</text>
</comment>
<proteinExistence type="inferred from homology"/>